<feature type="chain" id="PRO_0000210548" description="Uncharacterized protein MG337 homolog">
    <location>
        <begin position="1"/>
        <end position="140"/>
    </location>
</feature>
<gene>
    <name type="ordered locus">MPN_488</name>
    <name type="ORF">MP354</name>
    <name type="ORF">P02_orf140</name>
</gene>
<organism>
    <name type="scientific">Mycoplasma pneumoniae (strain ATCC 29342 / M129 / Subtype 1)</name>
    <name type="common">Mycoplasmoides pneumoniae</name>
    <dbReference type="NCBI Taxonomy" id="272634"/>
    <lineage>
        <taxon>Bacteria</taxon>
        <taxon>Bacillati</taxon>
        <taxon>Mycoplasmatota</taxon>
        <taxon>Mycoplasmoidales</taxon>
        <taxon>Mycoplasmoidaceae</taxon>
        <taxon>Mycoplasmoides</taxon>
    </lineage>
</organism>
<sequence length="140" mass="15911">MDRKIREQIIAIYSNLQHKQDLTQFAHCLTTKADDNCEDFFNLGLQFQNNQLTALGFNGEGCIISTIASELTLSALEGKTIKEAIVLLEQFMEAVQTGSLSTPLPQALQLLWDFQIDQKRLNCLLLTPQNLLQWLKDFSH</sequence>
<keyword id="KW-1185">Reference proteome</keyword>
<accession>P75297</accession>
<proteinExistence type="predicted"/>
<dbReference type="EMBL" id="U00089">
    <property type="protein sequence ID" value="AAB96002.1"/>
    <property type="molecule type" value="Genomic_DNA"/>
</dbReference>
<dbReference type="PIR" id="S73680">
    <property type="entry name" value="S73680"/>
</dbReference>
<dbReference type="RefSeq" id="NP_110176.1">
    <property type="nucleotide sequence ID" value="NC_000912.1"/>
</dbReference>
<dbReference type="RefSeq" id="WP_010874844.1">
    <property type="nucleotide sequence ID" value="NZ_OU342337.1"/>
</dbReference>
<dbReference type="SMR" id="P75297"/>
<dbReference type="STRING" id="272634.MPN_488"/>
<dbReference type="EnsemblBacteria" id="AAB96002">
    <property type="protein sequence ID" value="AAB96002"/>
    <property type="gene ID" value="MPN_488"/>
</dbReference>
<dbReference type="KEGG" id="mpn:MPN_488"/>
<dbReference type="PATRIC" id="fig|272634.6.peg.527"/>
<dbReference type="HOGENOM" id="CLU_1852995_0_0_14"/>
<dbReference type="OrthoDB" id="9804157at2"/>
<dbReference type="BioCyc" id="MPNE272634:G1GJ3-798-MONOMER"/>
<dbReference type="Proteomes" id="UP000000808">
    <property type="component" value="Chromosome"/>
</dbReference>
<dbReference type="GO" id="GO:0005506">
    <property type="term" value="F:iron ion binding"/>
    <property type="evidence" value="ECO:0007669"/>
    <property type="project" value="InterPro"/>
</dbReference>
<dbReference type="GO" id="GO:0051536">
    <property type="term" value="F:iron-sulfur cluster binding"/>
    <property type="evidence" value="ECO:0007669"/>
    <property type="project" value="InterPro"/>
</dbReference>
<dbReference type="GO" id="GO:0016226">
    <property type="term" value="P:iron-sulfur cluster assembly"/>
    <property type="evidence" value="ECO:0007669"/>
    <property type="project" value="InterPro"/>
</dbReference>
<dbReference type="CDD" id="cd06664">
    <property type="entry name" value="IscU_like"/>
    <property type="match status" value="1"/>
</dbReference>
<dbReference type="Gene3D" id="3.90.1010.10">
    <property type="match status" value="1"/>
</dbReference>
<dbReference type="InterPro" id="IPR002871">
    <property type="entry name" value="NIF_FeS_clus_asmbl_NifU_N"/>
</dbReference>
<dbReference type="Pfam" id="PF01592">
    <property type="entry name" value="NifU_N"/>
    <property type="match status" value="1"/>
</dbReference>
<dbReference type="SUPFAM" id="SSF82649">
    <property type="entry name" value="SufE/NifU"/>
    <property type="match status" value="1"/>
</dbReference>
<name>Y488_MYCPN</name>
<protein>
    <recommendedName>
        <fullName>Uncharacterized protein MG337 homolog</fullName>
    </recommendedName>
</protein>
<reference key="1">
    <citation type="journal article" date="1996" name="Nucleic Acids Res.">
        <title>Complete sequence analysis of the genome of the bacterium Mycoplasma pneumoniae.</title>
        <authorList>
            <person name="Himmelreich R."/>
            <person name="Hilbert H."/>
            <person name="Plagens H."/>
            <person name="Pirkl E."/>
            <person name="Li B.-C."/>
            <person name="Herrmann R."/>
        </authorList>
    </citation>
    <scope>NUCLEOTIDE SEQUENCE [LARGE SCALE GENOMIC DNA]</scope>
    <source>
        <strain>ATCC 29342 / M129 / Subtype 1</strain>
    </source>
</reference>